<comment type="function">
    <text>Probable transcriptional regulator that acts in conjunction with sigma-54.</text>
</comment>
<organism>
    <name type="scientific">Sinorhizobium fredii (strain NBRC 101917 / NGR234)</name>
    <dbReference type="NCBI Taxonomy" id="394"/>
    <lineage>
        <taxon>Bacteria</taxon>
        <taxon>Pseudomonadati</taxon>
        <taxon>Pseudomonadota</taxon>
        <taxon>Alphaproteobacteria</taxon>
        <taxon>Hyphomicrobiales</taxon>
        <taxon>Rhizobiaceae</taxon>
        <taxon>Sinorhizobium/Ensifer group</taxon>
        <taxon>Sinorhizobium</taxon>
    </lineage>
</organism>
<name>Y4PA_SINFN</name>
<accession>P55610</accession>
<evidence type="ECO:0000250" key="1"/>
<evidence type="ECO:0000255" key="2">
    <source>
        <dbReference type="PROSITE-ProRule" id="PRU00193"/>
    </source>
</evidence>
<dbReference type="EMBL" id="U00090">
    <property type="protein sequence ID" value="AAB91811.1"/>
    <property type="molecule type" value="Genomic_DNA"/>
</dbReference>
<dbReference type="RefSeq" id="NP_444014.1">
    <property type="nucleotide sequence ID" value="NC_000914.2"/>
</dbReference>
<dbReference type="RefSeq" id="WP_010875238.1">
    <property type="nucleotide sequence ID" value="NC_000914.2"/>
</dbReference>
<dbReference type="SMR" id="P55610"/>
<dbReference type="KEGG" id="rhi:NGR_a02110"/>
<dbReference type="PATRIC" id="fig|394.7.peg.222"/>
<dbReference type="eggNOG" id="COG2204">
    <property type="taxonomic scope" value="Bacteria"/>
</dbReference>
<dbReference type="eggNOG" id="COG5564">
    <property type="taxonomic scope" value="Bacteria"/>
</dbReference>
<dbReference type="HOGENOM" id="CLU_000445_122_0_5"/>
<dbReference type="OrthoDB" id="9805644at2"/>
<dbReference type="Proteomes" id="UP000001054">
    <property type="component" value="Plasmid pNGR234a"/>
</dbReference>
<dbReference type="GO" id="GO:0005524">
    <property type="term" value="F:ATP binding"/>
    <property type="evidence" value="ECO:0007669"/>
    <property type="project" value="UniProtKB-KW"/>
</dbReference>
<dbReference type="GO" id="GO:0016887">
    <property type="term" value="F:ATP hydrolysis activity"/>
    <property type="evidence" value="ECO:0007669"/>
    <property type="project" value="InterPro"/>
</dbReference>
<dbReference type="GO" id="GO:0043565">
    <property type="term" value="F:sequence-specific DNA binding"/>
    <property type="evidence" value="ECO:0007669"/>
    <property type="project" value="InterPro"/>
</dbReference>
<dbReference type="GO" id="GO:0000160">
    <property type="term" value="P:phosphorelay signal transduction system"/>
    <property type="evidence" value="ECO:0007669"/>
    <property type="project" value="UniProtKB-KW"/>
</dbReference>
<dbReference type="GO" id="GO:0006355">
    <property type="term" value="P:regulation of DNA-templated transcription"/>
    <property type="evidence" value="ECO:0007669"/>
    <property type="project" value="InterPro"/>
</dbReference>
<dbReference type="CDD" id="cd00009">
    <property type="entry name" value="AAA"/>
    <property type="match status" value="1"/>
</dbReference>
<dbReference type="Gene3D" id="1.10.8.60">
    <property type="match status" value="1"/>
</dbReference>
<dbReference type="Gene3D" id="3.20.20.70">
    <property type="entry name" value="Aldolase class I"/>
    <property type="match status" value="1"/>
</dbReference>
<dbReference type="Gene3D" id="1.10.10.60">
    <property type="entry name" value="Homeodomain-like"/>
    <property type="match status" value="1"/>
</dbReference>
<dbReference type="Gene3D" id="3.40.50.300">
    <property type="entry name" value="P-loop containing nucleotide triphosphate hydrolases"/>
    <property type="match status" value="1"/>
</dbReference>
<dbReference type="InterPro" id="IPR003593">
    <property type="entry name" value="AAA+_ATPase"/>
</dbReference>
<dbReference type="InterPro" id="IPR013785">
    <property type="entry name" value="Aldolase_TIM"/>
</dbReference>
<dbReference type="InterPro" id="IPR009057">
    <property type="entry name" value="Homeodomain-like_sf"/>
</dbReference>
<dbReference type="InterPro" id="IPR002197">
    <property type="entry name" value="HTH_Fis"/>
</dbReference>
<dbReference type="InterPro" id="IPR027417">
    <property type="entry name" value="P-loop_NTPase"/>
</dbReference>
<dbReference type="InterPro" id="IPR015813">
    <property type="entry name" value="Pyrv/PenolPyrv_kinase-like_dom"/>
</dbReference>
<dbReference type="InterPro" id="IPR002078">
    <property type="entry name" value="Sigma_54_int"/>
</dbReference>
<dbReference type="InterPro" id="IPR009215">
    <property type="entry name" value="TIM-br_IGPS-like"/>
</dbReference>
<dbReference type="InterPro" id="IPR051353">
    <property type="entry name" value="Tobamovirus_resist_UPF0261"/>
</dbReference>
<dbReference type="PANTHER" id="PTHR31862">
    <property type="entry name" value="UPF0261 DOMAIN PROTEIN (AFU_ORTHOLOGUE AFUA_1G10120)"/>
    <property type="match status" value="1"/>
</dbReference>
<dbReference type="PANTHER" id="PTHR31862:SF1">
    <property type="entry name" value="UPF0261 DOMAIN PROTEIN (AFU_ORTHOLOGUE AFUA_1G10120)"/>
    <property type="match status" value="1"/>
</dbReference>
<dbReference type="Pfam" id="PF02954">
    <property type="entry name" value="HTH_8"/>
    <property type="match status" value="1"/>
</dbReference>
<dbReference type="Pfam" id="PF09370">
    <property type="entry name" value="PEP_hydrolase"/>
    <property type="match status" value="1"/>
</dbReference>
<dbReference type="Pfam" id="PF00158">
    <property type="entry name" value="Sigma54_activat"/>
    <property type="match status" value="1"/>
</dbReference>
<dbReference type="PRINTS" id="PR01590">
    <property type="entry name" value="HTHFIS"/>
</dbReference>
<dbReference type="SMART" id="SM00382">
    <property type="entry name" value="AAA"/>
    <property type="match status" value="1"/>
</dbReference>
<dbReference type="SUPFAM" id="SSF46689">
    <property type="entry name" value="Homeodomain-like"/>
    <property type="match status" value="1"/>
</dbReference>
<dbReference type="SUPFAM" id="SSF52540">
    <property type="entry name" value="P-loop containing nucleoside triphosphate hydrolases"/>
    <property type="match status" value="1"/>
</dbReference>
<dbReference type="SUPFAM" id="SSF51621">
    <property type="entry name" value="Phosphoenolpyruvate/pyruvate domain"/>
    <property type="match status" value="1"/>
</dbReference>
<dbReference type="PROSITE" id="PS50045">
    <property type="entry name" value="SIGMA54_INTERACT_4"/>
    <property type="match status" value="1"/>
</dbReference>
<reference key="1">
    <citation type="journal article" date="1997" name="Nature">
        <title>Molecular basis of symbiosis between Rhizobium and legumes.</title>
        <authorList>
            <person name="Freiberg C.A."/>
            <person name="Fellay R."/>
            <person name="Bairoch A."/>
            <person name="Broughton W.J."/>
            <person name="Rosenthal A."/>
            <person name="Perret X."/>
        </authorList>
    </citation>
    <scope>NUCLEOTIDE SEQUENCE [LARGE SCALE GENOMIC DNA]</scope>
    <source>
        <strain>NBRC 101917 / NGR234</strain>
    </source>
</reference>
<reference key="2">
    <citation type="journal article" date="2009" name="Appl. Environ. Microbiol.">
        <title>Rhizobium sp. strain NGR234 possesses a remarkable number of secretion systems.</title>
        <authorList>
            <person name="Schmeisser C."/>
            <person name="Liesegang H."/>
            <person name="Krysciak D."/>
            <person name="Bakkou N."/>
            <person name="Le Quere A."/>
            <person name="Wollherr A."/>
            <person name="Heinemeyer I."/>
            <person name="Morgenstern B."/>
            <person name="Pommerening-Roeser A."/>
            <person name="Flores M."/>
            <person name="Palacios R."/>
            <person name="Brenner S."/>
            <person name="Gottschalk G."/>
            <person name="Schmitz R.A."/>
            <person name="Broughton W.J."/>
            <person name="Perret X."/>
            <person name="Strittmatter A.W."/>
            <person name="Streit W.R."/>
        </authorList>
    </citation>
    <scope>NUCLEOTIDE SEQUENCE [LARGE SCALE GENOMIC DNA]</scope>
    <source>
        <strain>NBRC 101917 / NGR234</strain>
    </source>
</reference>
<keyword id="KW-0067">ATP-binding</keyword>
<keyword id="KW-0238">DNA-binding</keyword>
<keyword id="KW-0547">Nucleotide-binding</keyword>
<keyword id="KW-0614">Plasmid</keyword>
<keyword id="KW-1185">Reference proteome</keyword>
<keyword id="KW-0804">Transcription</keyword>
<keyword id="KW-0805">Transcription regulation</keyword>
<keyword id="KW-0902">Two-component regulatory system</keyword>
<sequence>MADPIVHPGVHRPEFSAPLHARAEIIATLRAALGKPNTTLVGAAIGTGMAAQAASRGGADFILALNAGRLRSMGAPSIFSLLALRKSNDFVLDFAQSEILPFVKVPVFFGASAFDPRCSIEAELERIADAGFGAIVNFPTSIFLDGRFRADIEGAGLGFQRELEMLRAAQKRNMATLAYVRTVAEAQQAATAGVDIINLNLGWNVGGTVGSRTELSLRQAAEYAKIIFRQIRAISEDTLCVLEGGPIVSPDQMYEVSALSKADGYIGGSTIDRVPLEASMEQITSAFKSVGTLQKRIDELERQLEHVQREYSIVGRSPSIQQIKQRIEKLAASSLPVMITGQAGTGKKLLARGIHEAARRSGSKLISSEDASGESLFGFAPSEGGRKVLGLLQYHPKATLLIESVECLCVDAQERLIEVIETGAYRRLGDNERGRFEGRLILASTRPLPELGSSGQLIPALESRLAPGHVFLPPLCDRLEDLPLLAEHFLQALRKDRRSRKLSVDHSAYRVLMTYGWPENIRELRSVLETAAIRCEGDWIKSEHLPPLGDANADAPHPHPGEEREWILDALQRHRFRRGEAARYLGISRKTLYNKMRVYGLPLQPRERS</sequence>
<protein>
    <recommendedName>
        <fullName>Putative transcriptional regulatory protein y4pA</fullName>
    </recommendedName>
</protein>
<geneLocation type="plasmid">
    <name>sym pNGR234a</name>
</geneLocation>
<proteinExistence type="predicted"/>
<gene>
    <name type="ordered locus">NGR_a02110</name>
    <name type="ORF">y4pA</name>
</gene>
<feature type="chain" id="PRO_0000081402" description="Putative transcriptional regulatory protein y4pA">
    <location>
        <begin position="1"/>
        <end position="609"/>
    </location>
</feature>
<feature type="domain" description="Sigma-54 factor interaction" evidence="2">
    <location>
        <begin position="313"/>
        <end position="533"/>
    </location>
</feature>
<feature type="DNA-binding region" description="H-T-H motif" evidence="1">
    <location>
        <begin position="578"/>
        <end position="597"/>
    </location>
</feature>
<feature type="binding site" evidence="2">
    <location>
        <begin position="395"/>
        <end position="404"/>
    </location>
    <ligand>
        <name>ATP</name>
        <dbReference type="ChEBI" id="CHEBI:30616"/>
    </ligand>
</feature>